<name>SYFA_PYRHO</name>
<comment type="catalytic activity">
    <reaction evidence="1">
        <text>tRNA(Phe) + L-phenylalanine + ATP = L-phenylalanyl-tRNA(Phe) + AMP + diphosphate + H(+)</text>
        <dbReference type="Rhea" id="RHEA:19413"/>
        <dbReference type="Rhea" id="RHEA-COMP:9668"/>
        <dbReference type="Rhea" id="RHEA-COMP:9699"/>
        <dbReference type="ChEBI" id="CHEBI:15378"/>
        <dbReference type="ChEBI" id="CHEBI:30616"/>
        <dbReference type="ChEBI" id="CHEBI:33019"/>
        <dbReference type="ChEBI" id="CHEBI:58095"/>
        <dbReference type="ChEBI" id="CHEBI:78442"/>
        <dbReference type="ChEBI" id="CHEBI:78531"/>
        <dbReference type="ChEBI" id="CHEBI:456215"/>
        <dbReference type="EC" id="6.1.1.20"/>
    </reaction>
</comment>
<comment type="cofactor">
    <cofactor evidence="1">
        <name>Mg(2+)</name>
        <dbReference type="ChEBI" id="CHEBI:18420"/>
    </cofactor>
    <text evidence="1">Binds 2 magnesium ions per tetramer.</text>
</comment>
<comment type="subunit">
    <text evidence="1">Tetramer of two alpha and two beta subunits.</text>
</comment>
<comment type="subcellular location">
    <subcellularLocation>
        <location evidence="1">Cytoplasm</location>
    </subcellularLocation>
</comment>
<comment type="similarity">
    <text evidence="1">Belongs to the class-II aminoacyl-tRNA synthetase family. Phe-tRNA synthetase alpha subunit type 2 subfamily.</text>
</comment>
<evidence type="ECO:0000255" key="1">
    <source>
        <dbReference type="HAMAP-Rule" id="MF_00282"/>
    </source>
</evidence>
<accession>O58391</accession>
<organism>
    <name type="scientific">Pyrococcus horikoshii (strain ATCC 700860 / DSM 12428 / JCM 9974 / NBRC 100139 / OT-3)</name>
    <dbReference type="NCBI Taxonomy" id="70601"/>
    <lineage>
        <taxon>Archaea</taxon>
        <taxon>Methanobacteriati</taxon>
        <taxon>Methanobacteriota</taxon>
        <taxon>Thermococci</taxon>
        <taxon>Thermococcales</taxon>
        <taxon>Thermococcaceae</taxon>
        <taxon>Pyrococcus</taxon>
    </lineage>
</organism>
<gene>
    <name evidence="1" type="primary">pheS</name>
    <name type="ordered locus">PH0658</name>
</gene>
<proteinExistence type="inferred from homology"/>
<feature type="chain" id="PRO_0000126817" description="Phenylalanine--tRNA ligase alpha subunit">
    <location>
        <begin position="1"/>
        <end position="499"/>
    </location>
</feature>
<feature type="binding site" evidence="1">
    <location>
        <position position="342"/>
    </location>
    <ligand>
        <name>L-phenylalanine</name>
        <dbReference type="ChEBI" id="CHEBI:58095"/>
    </ligand>
</feature>
<feature type="binding site" evidence="1">
    <location>
        <begin position="381"/>
        <end position="383"/>
    </location>
    <ligand>
        <name>L-phenylalanine</name>
        <dbReference type="ChEBI" id="CHEBI:58095"/>
    </ligand>
</feature>
<feature type="binding site" evidence="1">
    <location>
        <position position="422"/>
    </location>
    <ligand>
        <name>L-phenylalanine</name>
        <dbReference type="ChEBI" id="CHEBI:58095"/>
    </ligand>
</feature>
<feature type="binding site" evidence="1">
    <location>
        <position position="424"/>
    </location>
    <ligand>
        <name>Mg(2+)</name>
        <dbReference type="ChEBI" id="CHEBI:18420"/>
        <note>shared with beta subunit</note>
    </ligand>
</feature>
<feature type="binding site" evidence="1">
    <location>
        <position position="447"/>
    </location>
    <ligand>
        <name>L-phenylalanine</name>
        <dbReference type="ChEBI" id="CHEBI:58095"/>
    </ligand>
</feature>
<keyword id="KW-0030">Aminoacyl-tRNA synthetase</keyword>
<keyword id="KW-0067">ATP-binding</keyword>
<keyword id="KW-0963">Cytoplasm</keyword>
<keyword id="KW-0436">Ligase</keyword>
<keyword id="KW-0460">Magnesium</keyword>
<keyword id="KW-0479">Metal-binding</keyword>
<keyword id="KW-0547">Nucleotide-binding</keyword>
<keyword id="KW-0648">Protein biosynthesis</keyword>
<dbReference type="EC" id="6.1.1.20" evidence="1"/>
<dbReference type="EMBL" id="BA000001">
    <property type="protein sequence ID" value="BAA29749.1"/>
    <property type="molecule type" value="Genomic_DNA"/>
</dbReference>
<dbReference type="PIR" id="C71111">
    <property type="entry name" value="C71111"/>
</dbReference>
<dbReference type="RefSeq" id="WP_010884753.1">
    <property type="nucleotide sequence ID" value="NC_000961.1"/>
</dbReference>
<dbReference type="SMR" id="O58391"/>
<dbReference type="STRING" id="70601.gene:9377602"/>
<dbReference type="EnsemblBacteria" id="BAA29749">
    <property type="protein sequence ID" value="BAA29749"/>
    <property type="gene ID" value="BAA29749"/>
</dbReference>
<dbReference type="GeneID" id="1442988"/>
<dbReference type="KEGG" id="pho:PH0658"/>
<dbReference type="eggNOG" id="arCOG00410">
    <property type="taxonomic scope" value="Archaea"/>
</dbReference>
<dbReference type="OrthoDB" id="372178at2157"/>
<dbReference type="Proteomes" id="UP000000752">
    <property type="component" value="Chromosome"/>
</dbReference>
<dbReference type="GO" id="GO:0005737">
    <property type="term" value="C:cytoplasm"/>
    <property type="evidence" value="ECO:0007669"/>
    <property type="project" value="UniProtKB-SubCell"/>
</dbReference>
<dbReference type="GO" id="GO:0005524">
    <property type="term" value="F:ATP binding"/>
    <property type="evidence" value="ECO:0007669"/>
    <property type="project" value="UniProtKB-UniRule"/>
</dbReference>
<dbReference type="GO" id="GO:0000287">
    <property type="term" value="F:magnesium ion binding"/>
    <property type="evidence" value="ECO:0007669"/>
    <property type="project" value="UniProtKB-UniRule"/>
</dbReference>
<dbReference type="GO" id="GO:0004826">
    <property type="term" value="F:phenylalanine-tRNA ligase activity"/>
    <property type="evidence" value="ECO:0007669"/>
    <property type="project" value="UniProtKB-UniRule"/>
</dbReference>
<dbReference type="GO" id="GO:0000049">
    <property type="term" value="F:tRNA binding"/>
    <property type="evidence" value="ECO:0007669"/>
    <property type="project" value="InterPro"/>
</dbReference>
<dbReference type="GO" id="GO:0006432">
    <property type="term" value="P:phenylalanyl-tRNA aminoacylation"/>
    <property type="evidence" value="ECO:0007669"/>
    <property type="project" value="UniProtKB-UniRule"/>
</dbReference>
<dbReference type="CDD" id="cd00496">
    <property type="entry name" value="PheRS_alpha_core"/>
    <property type="match status" value="1"/>
</dbReference>
<dbReference type="FunFam" id="3.30.930.10:FF:000095">
    <property type="entry name" value="Phenylalanine--tRNA ligase alpha subunit"/>
    <property type="match status" value="1"/>
</dbReference>
<dbReference type="Gene3D" id="3.30.930.10">
    <property type="entry name" value="Bira Bifunctional Protein, Domain 2"/>
    <property type="match status" value="1"/>
</dbReference>
<dbReference type="Gene3D" id="1.10.10.10">
    <property type="entry name" value="Winged helix-like DNA-binding domain superfamily/Winged helix DNA-binding domain"/>
    <property type="match status" value="1"/>
</dbReference>
<dbReference type="HAMAP" id="MF_00282">
    <property type="entry name" value="Phe_tRNA_synth_alpha2"/>
    <property type="match status" value="1"/>
</dbReference>
<dbReference type="InterPro" id="IPR006195">
    <property type="entry name" value="aa-tRNA-synth_II"/>
</dbReference>
<dbReference type="InterPro" id="IPR045864">
    <property type="entry name" value="aa-tRNA-synth_II/BPL/LPL"/>
</dbReference>
<dbReference type="InterPro" id="IPR004529">
    <property type="entry name" value="Phe-tRNA-synth_IIc_asu"/>
</dbReference>
<dbReference type="InterPro" id="IPR022917">
    <property type="entry name" value="Phe_tRNA_ligase_alpha_bac/arc"/>
</dbReference>
<dbReference type="InterPro" id="IPR002319">
    <property type="entry name" value="Phenylalanyl-tRNA_Synthase"/>
</dbReference>
<dbReference type="InterPro" id="IPR036388">
    <property type="entry name" value="WH-like_DNA-bd_sf"/>
</dbReference>
<dbReference type="InterPro" id="IPR036390">
    <property type="entry name" value="WH_DNA-bd_sf"/>
</dbReference>
<dbReference type="NCBIfam" id="TIGR00468">
    <property type="entry name" value="pheS"/>
    <property type="match status" value="1"/>
</dbReference>
<dbReference type="NCBIfam" id="NF003210">
    <property type="entry name" value="PRK04172.1"/>
    <property type="match status" value="1"/>
</dbReference>
<dbReference type="PANTHER" id="PTHR11538:SF40">
    <property type="entry name" value="PHENYLALANINE--TRNA LIGASE ALPHA SUBUNIT"/>
    <property type="match status" value="1"/>
</dbReference>
<dbReference type="PANTHER" id="PTHR11538">
    <property type="entry name" value="PHENYLALANYL-TRNA SYNTHETASE"/>
    <property type="match status" value="1"/>
</dbReference>
<dbReference type="Pfam" id="PF01409">
    <property type="entry name" value="tRNA-synt_2d"/>
    <property type="match status" value="1"/>
</dbReference>
<dbReference type="SUPFAM" id="SSF55681">
    <property type="entry name" value="Class II aaRS and biotin synthetases"/>
    <property type="match status" value="1"/>
</dbReference>
<dbReference type="SUPFAM" id="SSF46785">
    <property type="entry name" value="Winged helix' DNA-binding domain"/>
    <property type="match status" value="1"/>
</dbReference>
<dbReference type="PROSITE" id="PS50862">
    <property type="entry name" value="AA_TRNA_LIGASE_II"/>
    <property type="match status" value="1"/>
</dbReference>
<protein>
    <recommendedName>
        <fullName evidence="1">Phenylalanine--tRNA ligase alpha subunit</fullName>
        <ecNumber evidence="1">6.1.1.20</ecNumber>
    </recommendedName>
    <alternativeName>
        <fullName evidence="1">Phenylalanyl-tRNA synthetase alpha subunit</fullName>
        <shortName evidence="1">PheRS</shortName>
    </alternativeName>
</protein>
<reference key="1">
    <citation type="journal article" date="1998" name="DNA Res.">
        <title>Complete sequence and gene organization of the genome of a hyper-thermophilic archaebacterium, Pyrococcus horikoshii OT3.</title>
        <authorList>
            <person name="Kawarabayasi Y."/>
            <person name="Sawada M."/>
            <person name="Horikawa H."/>
            <person name="Haikawa Y."/>
            <person name="Hino Y."/>
            <person name="Yamamoto S."/>
            <person name="Sekine M."/>
            <person name="Baba S."/>
            <person name="Kosugi H."/>
            <person name="Hosoyama A."/>
            <person name="Nagai Y."/>
            <person name="Sakai M."/>
            <person name="Ogura K."/>
            <person name="Otsuka R."/>
            <person name="Nakazawa H."/>
            <person name="Takamiya M."/>
            <person name="Ohfuku Y."/>
            <person name="Funahashi T."/>
            <person name="Tanaka T."/>
            <person name="Kudoh Y."/>
            <person name="Yamazaki J."/>
            <person name="Kushida N."/>
            <person name="Oguchi A."/>
            <person name="Aoki K."/>
            <person name="Yoshizawa T."/>
            <person name="Nakamura Y."/>
            <person name="Robb F.T."/>
            <person name="Horikoshi K."/>
            <person name="Masuchi Y."/>
            <person name="Shizuya H."/>
            <person name="Kikuchi H."/>
        </authorList>
    </citation>
    <scope>NUCLEOTIDE SEQUENCE [LARGE SCALE GENOMIC DNA]</scope>
    <source>
        <strain>ATCC 700860 / DSM 12428 / JCM 9974 / NBRC 100139 / OT-3</strain>
    </source>
</reference>
<sequence>MRLGYNEKLVLLKLAELKNATVEELIEKTNLDQVAVMRALLTLQSQGLAKVHEERRRMIKLTETGKRYIEIGLPEIRALKILKEKGKVTLNDLKDVLSDEELKAIVGVLRKEGWAEVSKTKEGLTLKLSEKGKKAEKRAIDIALEVLSKGEVSVEEIEKIISVKELKRRKIAEEEEKVIRNVEITDKGLELVEKGIELKREVSILTPELIVTGKWREVEFKPFNIKAPVKKIYPGKKQPYRVFLDKIRRRLIEMGFIEMTVDSLIETQFWNFDALFQPQNHPAREWTDTYQLKYPEKGYLPDENLVSKVKEAHERGLAGSRGWGYVWSPERAMLLMPRAHATALSARELAKGIEIPGKYFTIQRVFRPDVLDRTHLIEFNQIDGFVASEDLTFRHLLGILKRFAIEIAGAKKVKFFPDYYPFTEPSVQLSAYHPELGWVEFGGAGIFREEMTEALGIKVPVIAWGIGIDRLAMFKLGVDDIRYLFSYDLKWLRESKLIW</sequence>